<protein>
    <recommendedName>
        <fullName evidence="1">DNA-directed RNA polymerase subunit beta'</fullName>
        <shortName evidence="1">RNAP subunit beta'</shortName>
        <ecNumber evidence="1">2.7.7.6</ecNumber>
    </recommendedName>
    <alternativeName>
        <fullName evidence="1">RNA polymerase subunit beta'</fullName>
    </alternativeName>
    <alternativeName>
        <fullName evidence="1">Transcriptase subunit beta'</fullName>
    </alternativeName>
</protein>
<feature type="chain" id="PRO_0000308869" description="DNA-directed RNA polymerase subunit beta'">
    <location>
        <begin position="1"/>
        <end position="1233"/>
    </location>
</feature>
<feature type="region of interest" description="Disordered" evidence="2">
    <location>
        <begin position="1211"/>
        <end position="1233"/>
    </location>
</feature>
<feature type="compositionally biased region" description="Basic and acidic residues" evidence="2">
    <location>
        <begin position="1211"/>
        <end position="1220"/>
    </location>
</feature>
<feature type="compositionally biased region" description="Polar residues" evidence="2">
    <location>
        <begin position="1221"/>
        <end position="1233"/>
    </location>
</feature>
<feature type="binding site" evidence="1">
    <location>
        <position position="61"/>
    </location>
    <ligand>
        <name>Zn(2+)</name>
        <dbReference type="ChEBI" id="CHEBI:29105"/>
        <label>1</label>
    </ligand>
</feature>
<feature type="binding site" evidence="1">
    <location>
        <position position="63"/>
    </location>
    <ligand>
        <name>Zn(2+)</name>
        <dbReference type="ChEBI" id="CHEBI:29105"/>
        <label>1</label>
    </ligand>
</feature>
<feature type="binding site" evidence="1">
    <location>
        <position position="76"/>
    </location>
    <ligand>
        <name>Zn(2+)</name>
        <dbReference type="ChEBI" id="CHEBI:29105"/>
        <label>1</label>
    </ligand>
</feature>
<feature type="binding site" evidence="1">
    <location>
        <position position="79"/>
    </location>
    <ligand>
        <name>Zn(2+)</name>
        <dbReference type="ChEBI" id="CHEBI:29105"/>
        <label>1</label>
    </ligand>
</feature>
<feature type="binding site" evidence="1">
    <location>
        <position position="455"/>
    </location>
    <ligand>
        <name>Mg(2+)</name>
        <dbReference type="ChEBI" id="CHEBI:18420"/>
    </ligand>
</feature>
<feature type="binding site" evidence="1">
    <location>
        <position position="457"/>
    </location>
    <ligand>
        <name>Mg(2+)</name>
        <dbReference type="ChEBI" id="CHEBI:18420"/>
    </ligand>
</feature>
<feature type="binding site" evidence="1">
    <location>
        <position position="459"/>
    </location>
    <ligand>
        <name>Mg(2+)</name>
        <dbReference type="ChEBI" id="CHEBI:18420"/>
    </ligand>
</feature>
<feature type="binding site" evidence="1">
    <location>
        <position position="824"/>
    </location>
    <ligand>
        <name>Zn(2+)</name>
        <dbReference type="ChEBI" id="CHEBI:29105"/>
        <label>2</label>
    </ligand>
</feature>
<feature type="binding site" evidence="1">
    <location>
        <position position="898"/>
    </location>
    <ligand>
        <name>Zn(2+)</name>
        <dbReference type="ChEBI" id="CHEBI:29105"/>
        <label>2</label>
    </ligand>
</feature>
<feature type="binding site" evidence="1">
    <location>
        <position position="905"/>
    </location>
    <ligand>
        <name>Zn(2+)</name>
        <dbReference type="ChEBI" id="CHEBI:29105"/>
        <label>2</label>
    </ligand>
</feature>
<feature type="binding site" evidence="1">
    <location>
        <position position="908"/>
    </location>
    <ligand>
        <name>Zn(2+)</name>
        <dbReference type="ChEBI" id="CHEBI:29105"/>
        <label>2</label>
    </ligand>
</feature>
<organism>
    <name type="scientific">Oenococcus oeni (strain ATCC BAA-331 / PSU-1)</name>
    <dbReference type="NCBI Taxonomy" id="203123"/>
    <lineage>
        <taxon>Bacteria</taxon>
        <taxon>Bacillati</taxon>
        <taxon>Bacillota</taxon>
        <taxon>Bacilli</taxon>
        <taxon>Lactobacillales</taxon>
        <taxon>Lactobacillaceae</taxon>
        <taxon>Oenococcus</taxon>
    </lineage>
</organism>
<comment type="function">
    <text evidence="1">DNA-dependent RNA polymerase catalyzes the transcription of DNA into RNA using the four ribonucleoside triphosphates as substrates.</text>
</comment>
<comment type="catalytic activity">
    <reaction evidence="1">
        <text>RNA(n) + a ribonucleoside 5'-triphosphate = RNA(n+1) + diphosphate</text>
        <dbReference type="Rhea" id="RHEA:21248"/>
        <dbReference type="Rhea" id="RHEA-COMP:14527"/>
        <dbReference type="Rhea" id="RHEA-COMP:17342"/>
        <dbReference type="ChEBI" id="CHEBI:33019"/>
        <dbReference type="ChEBI" id="CHEBI:61557"/>
        <dbReference type="ChEBI" id="CHEBI:140395"/>
        <dbReference type="EC" id="2.7.7.6"/>
    </reaction>
</comment>
<comment type="cofactor">
    <cofactor evidence="1">
        <name>Mg(2+)</name>
        <dbReference type="ChEBI" id="CHEBI:18420"/>
    </cofactor>
    <text evidence="1">Binds 1 Mg(2+) ion per subunit.</text>
</comment>
<comment type="cofactor">
    <cofactor evidence="1">
        <name>Zn(2+)</name>
        <dbReference type="ChEBI" id="CHEBI:29105"/>
    </cofactor>
    <text evidence="1">Binds 2 Zn(2+) ions per subunit.</text>
</comment>
<comment type="subunit">
    <text evidence="1">The RNAP catalytic core consists of 2 alpha, 1 beta, 1 beta' and 1 omega subunit. When a sigma factor is associated with the core the holoenzyme is formed, which can initiate transcription.</text>
</comment>
<comment type="similarity">
    <text evidence="1">Belongs to the RNA polymerase beta' chain family.</text>
</comment>
<name>RPOC_OENOB</name>
<sequence>MAIDVNKFESMQIGLASPAKIREWSYGEVKKPETINYRTLKAERDGLFDERIFGPIKDYECACGKYKRIRYKGIVCDRCGVEVTSSKVRRERMGHIELAAPVTHIWYFKGIPSRMGLILDMSPRSLEEIIYFASYVVINPGNTPLEKKQLITEAEYRQYQDQYGTDTFDAKMGAEAIKELLAEVDLEKQAKELKNELKDATGQKRTRAVRRLDIVEAFIQSGNKPEWMVMDVVPVIPPDLRPMVQLEGGRFATSDLNDLYRRVINRNNRLKRLLDLNAPGIIVQNEKRMLQEAVDALIDNGRRGRPVSGPGNRPLKSLSHLLKGKQGRFRQNLLGKRVDYSGRSVIDVGPFLKMNQMGLPRQMAVELFKPFIYNRLIELGTENGGANNLRSARCLVERHEDVVQDVLEEVVKEHPVLLNRAPTLHRLGIQAFEPVLVSGKAMRLHPLVTTAYNADFDGDQMAIHVPLSDEAQAEARLLMLAASHILAPKDGKPIVAPSQDMTIGNYYLTTEEAGIKGEGMIFSSADEVKMALQNHEVELHTRIGIAASSFDKAKPFTDHQRARIMVTTVGKVIFNEILPDDFPYINEPKSENFNGIDDRFFLDPGTDIVGWFKNESLNGPFKSGFLSDIIAQIYARYQVTRTSVLLDDMKDLGYDISTRSGLTVAMSDVTELPEKGEVLKEAHEKVAKITKQFRRGLLTDDERYIQVTQTWSDAQDKIKSMLIASFDSKNPIFMMSDSGARGNISNFVQLAGMRGLMAAPNGKVIELPVTANFREGLSVLEMFISTHGARKGMTDTALKTANSGYLTRRLVDVAQEVIVREEDCGTDRGLDVSAIMDGNEVIEPLYDRILGRYAMKPVIDPKTGEVIAKKNQMIDEHVADQIIDAGIQTVTIRSIFTCRTEHGVCVKCYGRNMATGDIVEVGEAVGTVAAQSIGEPGTQLTMRTFHTGGVALSEDITQGLPRVQEIFEARNPKGRAEISEVTGKVTSIEENPADRTKTVTIEGETDTREYVLPISARLRVAEGDEIHRSEAINEGPLDPKELIKVSSTLKTENYMLAEVQKVYRMQGVGIADKHVEVMVRQMLRKVRVMDPGQTDLLPGELLDIADFRRANAKTILSGQTAATSRPVLLGITKASLETNSFLSAASFQETTRVLTDAAIRGKNDPLVGLKENVIIGKVIPAGTGVAEYRHIKDEVVAAPVEPLEKIPTLDELQKAFDKEPASSTGNKASNSAK</sequence>
<gene>
    <name evidence="1" type="primary">rpoC</name>
    <name type="ordered locus">OEOE_1374</name>
</gene>
<proteinExistence type="inferred from homology"/>
<accession>Q04E86</accession>
<reference key="1">
    <citation type="journal article" date="2006" name="Proc. Natl. Acad. Sci. U.S.A.">
        <title>Comparative genomics of the lactic acid bacteria.</title>
        <authorList>
            <person name="Makarova K.S."/>
            <person name="Slesarev A."/>
            <person name="Wolf Y.I."/>
            <person name="Sorokin A."/>
            <person name="Mirkin B."/>
            <person name="Koonin E.V."/>
            <person name="Pavlov A."/>
            <person name="Pavlova N."/>
            <person name="Karamychev V."/>
            <person name="Polouchine N."/>
            <person name="Shakhova V."/>
            <person name="Grigoriev I."/>
            <person name="Lou Y."/>
            <person name="Rohksar D."/>
            <person name="Lucas S."/>
            <person name="Huang K."/>
            <person name="Goodstein D.M."/>
            <person name="Hawkins T."/>
            <person name="Plengvidhya V."/>
            <person name="Welker D."/>
            <person name="Hughes J."/>
            <person name="Goh Y."/>
            <person name="Benson A."/>
            <person name="Baldwin K."/>
            <person name="Lee J.-H."/>
            <person name="Diaz-Muniz I."/>
            <person name="Dosti B."/>
            <person name="Smeianov V."/>
            <person name="Wechter W."/>
            <person name="Barabote R."/>
            <person name="Lorca G."/>
            <person name="Altermann E."/>
            <person name="Barrangou R."/>
            <person name="Ganesan B."/>
            <person name="Xie Y."/>
            <person name="Rawsthorne H."/>
            <person name="Tamir D."/>
            <person name="Parker C."/>
            <person name="Breidt F."/>
            <person name="Broadbent J.R."/>
            <person name="Hutkins R."/>
            <person name="O'Sullivan D."/>
            <person name="Steele J."/>
            <person name="Unlu G."/>
            <person name="Saier M.H. Jr."/>
            <person name="Klaenhammer T."/>
            <person name="Richardson P."/>
            <person name="Kozyavkin S."/>
            <person name="Weimer B.C."/>
            <person name="Mills D.A."/>
        </authorList>
    </citation>
    <scope>NUCLEOTIDE SEQUENCE [LARGE SCALE GENOMIC DNA]</scope>
    <source>
        <strain>ATCC BAA-331 / PSU-1</strain>
    </source>
</reference>
<keyword id="KW-0240">DNA-directed RNA polymerase</keyword>
<keyword id="KW-0460">Magnesium</keyword>
<keyword id="KW-0479">Metal-binding</keyword>
<keyword id="KW-0548">Nucleotidyltransferase</keyword>
<keyword id="KW-1185">Reference proteome</keyword>
<keyword id="KW-0804">Transcription</keyword>
<keyword id="KW-0808">Transferase</keyword>
<keyword id="KW-0862">Zinc</keyword>
<evidence type="ECO:0000255" key="1">
    <source>
        <dbReference type="HAMAP-Rule" id="MF_01322"/>
    </source>
</evidence>
<evidence type="ECO:0000256" key="2">
    <source>
        <dbReference type="SAM" id="MobiDB-lite"/>
    </source>
</evidence>
<dbReference type="EC" id="2.7.7.6" evidence="1"/>
<dbReference type="EMBL" id="CP000411">
    <property type="protein sequence ID" value="ABJ57236.1"/>
    <property type="molecule type" value="Genomic_DNA"/>
</dbReference>
<dbReference type="RefSeq" id="WP_011677688.1">
    <property type="nucleotide sequence ID" value="NC_008528.1"/>
</dbReference>
<dbReference type="SMR" id="Q04E86"/>
<dbReference type="STRING" id="203123.OEOE_1374"/>
<dbReference type="KEGG" id="ooe:OEOE_1374"/>
<dbReference type="PATRIC" id="fig|203123.7.peg.1388"/>
<dbReference type="eggNOG" id="COG0086">
    <property type="taxonomic scope" value="Bacteria"/>
</dbReference>
<dbReference type="HOGENOM" id="CLU_000524_3_1_9"/>
<dbReference type="Proteomes" id="UP000000774">
    <property type="component" value="Chromosome"/>
</dbReference>
<dbReference type="GO" id="GO:0000428">
    <property type="term" value="C:DNA-directed RNA polymerase complex"/>
    <property type="evidence" value="ECO:0007669"/>
    <property type="project" value="UniProtKB-KW"/>
</dbReference>
<dbReference type="GO" id="GO:0003677">
    <property type="term" value="F:DNA binding"/>
    <property type="evidence" value="ECO:0007669"/>
    <property type="project" value="UniProtKB-UniRule"/>
</dbReference>
<dbReference type="GO" id="GO:0003899">
    <property type="term" value="F:DNA-directed RNA polymerase activity"/>
    <property type="evidence" value="ECO:0007669"/>
    <property type="project" value="UniProtKB-UniRule"/>
</dbReference>
<dbReference type="GO" id="GO:0000287">
    <property type="term" value="F:magnesium ion binding"/>
    <property type="evidence" value="ECO:0007669"/>
    <property type="project" value="UniProtKB-UniRule"/>
</dbReference>
<dbReference type="GO" id="GO:0008270">
    <property type="term" value="F:zinc ion binding"/>
    <property type="evidence" value="ECO:0007669"/>
    <property type="project" value="UniProtKB-UniRule"/>
</dbReference>
<dbReference type="GO" id="GO:0006351">
    <property type="term" value="P:DNA-templated transcription"/>
    <property type="evidence" value="ECO:0007669"/>
    <property type="project" value="UniProtKB-UniRule"/>
</dbReference>
<dbReference type="CDD" id="cd02655">
    <property type="entry name" value="RNAP_beta'_C"/>
    <property type="match status" value="1"/>
</dbReference>
<dbReference type="CDD" id="cd01609">
    <property type="entry name" value="RNAP_beta'_N"/>
    <property type="match status" value="1"/>
</dbReference>
<dbReference type="FunFam" id="1.10.150.390:FF:000002">
    <property type="entry name" value="DNA-directed RNA polymerase subunit beta"/>
    <property type="match status" value="1"/>
</dbReference>
<dbReference type="FunFam" id="4.10.860.120:FF:000001">
    <property type="entry name" value="DNA-directed RNA polymerase subunit beta"/>
    <property type="match status" value="1"/>
</dbReference>
<dbReference type="Gene3D" id="1.10.132.30">
    <property type="match status" value="1"/>
</dbReference>
<dbReference type="Gene3D" id="1.10.150.390">
    <property type="match status" value="1"/>
</dbReference>
<dbReference type="Gene3D" id="1.10.1790.20">
    <property type="match status" value="1"/>
</dbReference>
<dbReference type="Gene3D" id="1.10.40.90">
    <property type="match status" value="1"/>
</dbReference>
<dbReference type="Gene3D" id="2.40.40.20">
    <property type="match status" value="1"/>
</dbReference>
<dbReference type="Gene3D" id="2.40.50.100">
    <property type="match status" value="1"/>
</dbReference>
<dbReference type="Gene3D" id="4.10.860.120">
    <property type="entry name" value="RNA polymerase II, clamp domain"/>
    <property type="match status" value="1"/>
</dbReference>
<dbReference type="Gene3D" id="1.10.274.100">
    <property type="entry name" value="RNA polymerase Rpb1, domain 3"/>
    <property type="match status" value="1"/>
</dbReference>
<dbReference type="HAMAP" id="MF_01322">
    <property type="entry name" value="RNApol_bact_RpoC"/>
    <property type="match status" value="1"/>
</dbReference>
<dbReference type="InterPro" id="IPR045867">
    <property type="entry name" value="DNA-dir_RpoC_beta_prime"/>
</dbReference>
<dbReference type="InterPro" id="IPR012754">
    <property type="entry name" value="DNA-dir_RpoC_beta_prime_bact"/>
</dbReference>
<dbReference type="InterPro" id="IPR000722">
    <property type="entry name" value="RNA_pol_asu"/>
</dbReference>
<dbReference type="InterPro" id="IPR006592">
    <property type="entry name" value="RNA_pol_N"/>
</dbReference>
<dbReference type="InterPro" id="IPR007080">
    <property type="entry name" value="RNA_pol_Rpb1_1"/>
</dbReference>
<dbReference type="InterPro" id="IPR007066">
    <property type="entry name" value="RNA_pol_Rpb1_3"/>
</dbReference>
<dbReference type="InterPro" id="IPR042102">
    <property type="entry name" value="RNA_pol_Rpb1_3_sf"/>
</dbReference>
<dbReference type="InterPro" id="IPR007083">
    <property type="entry name" value="RNA_pol_Rpb1_4"/>
</dbReference>
<dbReference type="InterPro" id="IPR007081">
    <property type="entry name" value="RNA_pol_Rpb1_5"/>
</dbReference>
<dbReference type="InterPro" id="IPR044893">
    <property type="entry name" value="RNA_pol_Rpb1_clamp_domain"/>
</dbReference>
<dbReference type="InterPro" id="IPR038120">
    <property type="entry name" value="Rpb1_funnel_sf"/>
</dbReference>
<dbReference type="NCBIfam" id="TIGR02386">
    <property type="entry name" value="rpoC_TIGR"/>
    <property type="match status" value="1"/>
</dbReference>
<dbReference type="PANTHER" id="PTHR19376">
    <property type="entry name" value="DNA-DIRECTED RNA POLYMERASE"/>
    <property type="match status" value="1"/>
</dbReference>
<dbReference type="PANTHER" id="PTHR19376:SF54">
    <property type="entry name" value="DNA-DIRECTED RNA POLYMERASE SUBUNIT BETA"/>
    <property type="match status" value="1"/>
</dbReference>
<dbReference type="Pfam" id="PF04997">
    <property type="entry name" value="RNA_pol_Rpb1_1"/>
    <property type="match status" value="1"/>
</dbReference>
<dbReference type="Pfam" id="PF00623">
    <property type="entry name" value="RNA_pol_Rpb1_2"/>
    <property type="match status" value="1"/>
</dbReference>
<dbReference type="Pfam" id="PF04983">
    <property type="entry name" value="RNA_pol_Rpb1_3"/>
    <property type="match status" value="1"/>
</dbReference>
<dbReference type="Pfam" id="PF05000">
    <property type="entry name" value="RNA_pol_Rpb1_4"/>
    <property type="match status" value="1"/>
</dbReference>
<dbReference type="Pfam" id="PF04998">
    <property type="entry name" value="RNA_pol_Rpb1_5"/>
    <property type="match status" value="1"/>
</dbReference>
<dbReference type="SMART" id="SM00663">
    <property type="entry name" value="RPOLA_N"/>
    <property type="match status" value="1"/>
</dbReference>
<dbReference type="SUPFAM" id="SSF64484">
    <property type="entry name" value="beta and beta-prime subunits of DNA dependent RNA-polymerase"/>
    <property type="match status" value="1"/>
</dbReference>